<name>RL17_SALTY</name>
<protein>
    <recommendedName>
        <fullName evidence="1">Large ribosomal subunit protein bL17</fullName>
    </recommendedName>
    <alternativeName>
        <fullName evidence="2">50S ribosomal protein L17</fullName>
    </alternativeName>
</protein>
<organism>
    <name type="scientific">Salmonella typhimurium (strain LT2 / SGSC1412 / ATCC 700720)</name>
    <dbReference type="NCBI Taxonomy" id="99287"/>
    <lineage>
        <taxon>Bacteria</taxon>
        <taxon>Pseudomonadati</taxon>
        <taxon>Pseudomonadota</taxon>
        <taxon>Gammaproteobacteria</taxon>
        <taxon>Enterobacterales</taxon>
        <taxon>Enterobacteriaceae</taxon>
        <taxon>Salmonella</taxon>
    </lineage>
</organism>
<dbReference type="EMBL" id="AE006468">
    <property type="protein sequence ID" value="AAL22277.1"/>
    <property type="molecule type" value="Genomic_DNA"/>
</dbReference>
<dbReference type="RefSeq" id="NP_462318.1">
    <property type="nucleotide sequence ID" value="NC_003197.2"/>
</dbReference>
<dbReference type="RefSeq" id="WP_001216370.1">
    <property type="nucleotide sequence ID" value="NC_003197.2"/>
</dbReference>
<dbReference type="SMR" id="Q7CPL7"/>
<dbReference type="STRING" id="99287.STM3414"/>
<dbReference type="PaxDb" id="99287-STM3414"/>
<dbReference type="GeneID" id="1254937"/>
<dbReference type="GeneID" id="89546962"/>
<dbReference type="KEGG" id="stm:STM3414"/>
<dbReference type="PATRIC" id="fig|99287.12.peg.3611"/>
<dbReference type="HOGENOM" id="CLU_074407_2_0_6"/>
<dbReference type="OMA" id="EHKRINT"/>
<dbReference type="PhylomeDB" id="Q7CPL7"/>
<dbReference type="BioCyc" id="SENT99287:STM3414-MONOMER"/>
<dbReference type="PRO" id="PR:Q7CPL7"/>
<dbReference type="Proteomes" id="UP000001014">
    <property type="component" value="Chromosome"/>
</dbReference>
<dbReference type="GO" id="GO:0022625">
    <property type="term" value="C:cytosolic large ribosomal subunit"/>
    <property type="evidence" value="ECO:0000318"/>
    <property type="project" value="GO_Central"/>
</dbReference>
<dbReference type="GO" id="GO:0003735">
    <property type="term" value="F:structural constituent of ribosome"/>
    <property type="evidence" value="ECO:0000318"/>
    <property type="project" value="GO_Central"/>
</dbReference>
<dbReference type="GO" id="GO:0006412">
    <property type="term" value="P:translation"/>
    <property type="evidence" value="ECO:0007669"/>
    <property type="project" value="UniProtKB-UniRule"/>
</dbReference>
<dbReference type="FunFam" id="3.90.1030.10:FF:000001">
    <property type="entry name" value="50S ribosomal protein L17"/>
    <property type="match status" value="1"/>
</dbReference>
<dbReference type="Gene3D" id="3.90.1030.10">
    <property type="entry name" value="Ribosomal protein L17"/>
    <property type="match status" value="1"/>
</dbReference>
<dbReference type="HAMAP" id="MF_01368">
    <property type="entry name" value="Ribosomal_bL17"/>
    <property type="match status" value="1"/>
</dbReference>
<dbReference type="InterPro" id="IPR000456">
    <property type="entry name" value="Ribosomal_bL17"/>
</dbReference>
<dbReference type="InterPro" id="IPR047859">
    <property type="entry name" value="Ribosomal_bL17_CS"/>
</dbReference>
<dbReference type="InterPro" id="IPR036373">
    <property type="entry name" value="Ribosomal_bL17_sf"/>
</dbReference>
<dbReference type="NCBIfam" id="TIGR00059">
    <property type="entry name" value="L17"/>
    <property type="match status" value="1"/>
</dbReference>
<dbReference type="PANTHER" id="PTHR14413:SF16">
    <property type="entry name" value="LARGE RIBOSOMAL SUBUNIT PROTEIN BL17M"/>
    <property type="match status" value="1"/>
</dbReference>
<dbReference type="PANTHER" id="PTHR14413">
    <property type="entry name" value="RIBOSOMAL PROTEIN L17"/>
    <property type="match status" value="1"/>
</dbReference>
<dbReference type="Pfam" id="PF01196">
    <property type="entry name" value="Ribosomal_L17"/>
    <property type="match status" value="1"/>
</dbReference>
<dbReference type="SUPFAM" id="SSF64263">
    <property type="entry name" value="Prokaryotic ribosomal protein L17"/>
    <property type="match status" value="1"/>
</dbReference>
<dbReference type="PROSITE" id="PS01167">
    <property type="entry name" value="RIBOSOMAL_L17"/>
    <property type="match status" value="1"/>
</dbReference>
<proteinExistence type="inferred from homology"/>
<sequence length="127" mass="14395">MRHRKSGRQLNRNSSHRQAMFRNMAGSLVRHEIIKTTLPKAKELRRVVEPLITLAKTDSVANRRLAFARTRDNEIVAKLFNELGPRFASRAGGYTRILKCGFRAGDNAPMAYIELVDRSEKTEAAAE</sequence>
<accession>Q7CPL7</accession>
<feature type="chain" id="PRO_0000267940" description="Large ribosomal subunit protein bL17">
    <location>
        <begin position="1"/>
        <end position="127"/>
    </location>
</feature>
<reference key="1">
    <citation type="journal article" date="2001" name="Nature">
        <title>Complete genome sequence of Salmonella enterica serovar Typhimurium LT2.</title>
        <authorList>
            <person name="McClelland M."/>
            <person name="Sanderson K.E."/>
            <person name="Spieth J."/>
            <person name="Clifton S.W."/>
            <person name="Latreille P."/>
            <person name="Courtney L."/>
            <person name="Porwollik S."/>
            <person name="Ali J."/>
            <person name="Dante M."/>
            <person name="Du F."/>
            <person name="Hou S."/>
            <person name="Layman D."/>
            <person name="Leonard S."/>
            <person name="Nguyen C."/>
            <person name="Scott K."/>
            <person name="Holmes A."/>
            <person name="Grewal N."/>
            <person name="Mulvaney E."/>
            <person name="Ryan E."/>
            <person name="Sun H."/>
            <person name="Florea L."/>
            <person name="Miller W."/>
            <person name="Stoneking T."/>
            <person name="Nhan M."/>
            <person name="Waterston R."/>
            <person name="Wilson R.K."/>
        </authorList>
    </citation>
    <scope>NUCLEOTIDE SEQUENCE [LARGE SCALE GENOMIC DNA]</scope>
    <source>
        <strain>LT2 / SGSC1412 / ATCC 700720</strain>
    </source>
</reference>
<gene>
    <name evidence="1" type="primary">rplQ</name>
    <name type="ordered locus">STM3414</name>
</gene>
<comment type="subunit">
    <text evidence="1">Part of the 50S ribosomal subunit. Contacts protein L32.</text>
</comment>
<comment type="similarity">
    <text evidence="1">Belongs to the bacterial ribosomal protein bL17 family.</text>
</comment>
<evidence type="ECO:0000255" key="1">
    <source>
        <dbReference type="HAMAP-Rule" id="MF_01368"/>
    </source>
</evidence>
<evidence type="ECO:0000305" key="2"/>
<keyword id="KW-1185">Reference proteome</keyword>
<keyword id="KW-0687">Ribonucleoprotein</keyword>
<keyword id="KW-0689">Ribosomal protein</keyword>